<accession>A6U1W3</accession>
<feature type="chain" id="PRO_1000088230" description="Segregation and condensation protein B">
    <location>
        <begin position="1"/>
        <end position="180"/>
    </location>
</feature>
<organism>
    <name type="scientific">Staphylococcus aureus (strain JH1)</name>
    <dbReference type="NCBI Taxonomy" id="359787"/>
    <lineage>
        <taxon>Bacteria</taxon>
        <taxon>Bacillati</taxon>
        <taxon>Bacillota</taxon>
        <taxon>Bacilli</taxon>
        <taxon>Bacillales</taxon>
        <taxon>Staphylococcaceae</taxon>
        <taxon>Staphylococcus</taxon>
    </lineage>
</organism>
<dbReference type="EMBL" id="CP000736">
    <property type="protein sequence ID" value="ABR52431.1"/>
    <property type="molecule type" value="Genomic_DNA"/>
</dbReference>
<dbReference type="SMR" id="A6U1W3"/>
<dbReference type="KEGG" id="sah:SaurJH1_1582"/>
<dbReference type="HOGENOM" id="CLU_045647_5_3_9"/>
<dbReference type="GO" id="GO:0005737">
    <property type="term" value="C:cytoplasm"/>
    <property type="evidence" value="ECO:0007669"/>
    <property type="project" value="UniProtKB-SubCell"/>
</dbReference>
<dbReference type="GO" id="GO:0051301">
    <property type="term" value="P:cell division"/>
    <property type="evidence" value="ECO:0007669"/>
    <property type="project" value="UniProtKB-KW"/>
</dbReference>
<dbReference type="GO" id="GO:0051304">
    <property type="term" value="P:chromosome separation"/>
    <property type="evidence" value="ECO:0007669"/>
    <property type="project" value="InterPro"/>
</dbReference>
<dbReference type="GO" id="GO:0006260">
    <property type="term" value="P:DNA replication"/>
    <property type="evidence" value="ECO:0007669"/>
    <property type="project" value="UniProtKB-UniRule"/>
</dbReference>
<dbReference type="Gene3D" id="1.10.10.10">
    <property type="entry name" value="Winged helix-like DNA-binding domain superfamily/Winged helix DNA-binding domain"/>
    <property type="match status" value="2"/>
</dbReference>
<dbReference type="HAMAP" id="MF_01804">
    <property type="entry name" value="ScpB"/>
    <property type="match status" value="1"/>
</dbReference>
<dbReference type="InterPro" id="IPR005234">
    <property type="entry name" value="ScpB_csome_segregation"/>
</dbReference>
<dbReference type="InterPro" id="IPR036388">
    <property type="entry name" value="WH-like_DNA-bd_sf"/>
</dbReference>
<dbReference type="InterPro" id="IPR036390">
    <property type="entry name" value="WH_DNA-bd_sf"/>
</dbReference>
<dbReference type="NCBIfam" id="TIGR00281">
    <property type="entry name" value="SMC-Scp complex subunit ScpB"/>
    <property type="match status" value="1"/>
</dbReference>
<dbReference type="PANTHER" id="PTHR34298">
    <property type="entry name" value="SEGREGATION AND CONDENSATION PROTEIN B"/>
    <property type="match status" value="1"/>
</dbReference>
<dbReference type="PANTHER" id="PTHR34298:SF2">
    <property type="entry name" value="SEGREGATION AND CONDENSATION PROTEIN B"/>
    <property type="match status" value="1"/>
</dbReference>
<dbReference type="Pfam" id="PF04079">
    <property type="entry name" value="SMC_ScpB"/>
    <property type="match status" value="1"/>
</dbReference>
<dbReference type="PIRSF" id="PIRSF019345">
    <property type="entry name" value="ScpB"/>
    <property type="match status" value="1"/>
</dbReference>
<dbReference type="SUPFAM" id="SSF46785">
    <property type="entry name" value="Winged helix' DNA-binding domain"/>
    <property type="match status" value="2"/>
</dbReference>
<evidence type="ECO:0000255" key="1">
    <source>
        <dbReference type="HAMAP-Rule" id="MF_01804"/>
    </source>
</evidence>
<gene>
    <name evidence="1" type="primary">scpB</name>
    <name type="ordered locus">SaurJH1_1582</name>
</gene>
<protein>
    <recommendedName>
        <fullName evidence="1">Segregation and condensation protein B</fullName>
    </recommendedName>
</protein>
<comment type="function">
    <text evidence="1">Participates in chromosomal partition during cell division. May act via the formation of a condensin-like complex containing Smc and ScpA that pull DNA away from mid-cell into both cell halves.</text>
</comment>
<comment type="subunit">
    <text evidence="1">Homodimer. Homodimerization may be required to stabilize the binding of ScpA to the Smc head domains. Component of a cohesin-like complex composed of ScpA, ScpB and the Smc homodimer, in which ScpA and ScpB bind to the head domain of Smc. The presence of the three proteins is required for the association of the complex with DNA.</text>
</comment>
<comment type="subcellular location">
    <subcellularLocation>
        <location evidence="1">Cytoplasm</location>
    </subcellularLocation>
    <text evidence="1">Associated with two foci at the outer edges of the nucleoid region in young cells, and at four foci within both cell halves in older cells.</text>
</comment>
<comment type="similarity">
    <text evidence="1">Belongs to the ScpB family.</text>
</comment>
<name>SCPB_STAA2</name>
<keyword id="KW-0131">Cell cycle</keyword>
<keyword id="KW-0132">Cell division</keyword>
<keyword id="KW-0159">Chromosome partition</keyword>
<keyword id="KW-0963">Cytoplasm</keyword>
<sequence>MDNHGILESLLFTAGDEGLDEKQLLEILDMSKDQLVELIENYSSHGLMIQRFGTTYVLTTKKEAATYIEQLIEQKSQMKLSQAAMEVLSIIAYNQPLSRSDIELIRSINSDGAVKTLIAKGLVEAKVVNEQRSQQLITTDLFLNVFGISNIEDLPTTEEDDEEMDAFFSNLVNQKGENND</sequence>
<reference key="1">
    <citation type="submission" date="2007-06" db="EMBL/GenBank/DDBJ databases">
        <title>Complete sequence of chromosome of Staphylococcus aureus subsp. aureus JH1.</title>
        <authorList>
            <consortium name="US DOE Joint Genome Institute"/>
            <person name="Copeland A."/>
            <person name="Lucas S."/>
            <person name="Lapidus A."/>
            <person name="Barry K."/>
            <person name="Detter J.C."/>
            <person name="Glavina del Rio T."/>
            <person name="Hammon N."/>
            <person name="Israni S."/>
            <person name="Dalin E."/>
            <person name="Tice H."/>
            <person name="Pitluck S."/>
            <person name="Chain P."/>
            <person name="Malfatti S."/>
            <person name="Shin M."/>
            <person name="Vergez L."/>
            <person name="Schmutz J."/>
            <person name="Larimer F."/>
            <person name="Land M."/>
            <person name="Hauser L."/>
            <person name="Kyrpides N."/>
            <person name="Ivanova N."/>
            <person name="Tomasz A."/>
            <person name="Richardson P."/>
        </authorList>
    </citation>
    <scope>NUCLEOTIDE SEQUENCE [LARGE SCALE GENOMIC DNA]</scope>
    <source>
        <strain>JH1</strain>
    </source>
</reference>
<proteinExistence type="inferred from homology"/>